<accession>Q0G9L9</accession>
<reference key="1">
    <citation type="journal article" date="2006" name="BMC Evol. Biol.">
        <title>Complete plastid genome sequences of Drimys, Liriodendron, and Piper: implications for the phylogenetic relationships of magnoliids.</title>
        <authorList>
            <person name="Cai Z."/>
            <person name="Penaflor C."/>
            <person name="Kuehl J.V."/>
            <person name="Leebens-Mack J."/>
            <person name="Carlson J.E."/>
            <person name="dePamphilis C.W."/>
            <person name="Boore J.L."/>
            <person name="Jansen R.K."/>
        </authorList>
    </citation>
    <scope>NUCLEOTIDE SEQUENCE [LARGE SCALE GENOMIC DNA]</scope>
</reference>
<evidence type="ECO:0000255" key="1">
    <source>
        <dbReference type="HAMAP-Rule" id="MF_00458"/>
    </source>
</evidence>
<organism>
    <name type="scientific">Liriodendron tulipifera</name>
    <name type="common">Tuliptree</name>
    <name type="synonym">Tulip poplar</name>
    <dbReference type="NCBI Taxonomy" id="3415"/>
    <lineage>
        <taxon>Eukaryota</taxon>
        <taxon>Viridiplantae</taxon>
        <taxon>Streptophyta</taxon>
        <taxon>Embryophyta</taxon>
        <taxon>Tracheophyta</taxon>
        <taxon>Spermatophyta</taxon>
        <taxon>Magnoliopsida</taxon>
        <taxon>Magnoliidae</taxon>
        <taxon>Magnoliales</taxon>
        <taxon>Magnoliaceae</taxon>
        <taxon>Liriodendron</taxon>
    </lineage>
</organism>
<name>PSAA_LIRTU</name>
<proteinExistence type="inferred from homology"/>
<gene>
    <name evidence="1" type="primary">psaA</name>
</gene>
<geneLocation type="chloroplast"/>
<dbReference type="EC" id="1.97.1.12" evidence="1"/>
<dbReference type="EMBL" id="DQ899947">
    <property type="protein sequence ID" value="ABI32509.1"/>
    <property type="molecule type" value="Genomic_DNA"/>
</dbReference>
<dbReference type="RefSeq" id="YP_740202.1">
    <property type="nucleotide sequence ID" value="NC_008326.1"/>
</dbReference>
<dbReference type="SMR" id="Q0G9L9"/>
<dbReference type="GeneID" id="4266618"/>
<dbReference type="GO" id="GO:0009535">
    <property type="term" value="C:chloroplast thylakoid membrane"/>
    <property type="evidence" value="ECO:0007669"/>
    <property type="project" value="UniProtKB-SubCell"/>
</dbReference>
<dbReference type="GO" id="GO:0009522">
    <property type="term" value="C:photosystem I"/>
    <property type="evidence" value="ECO:0007669"/>
    <property type="project" value="UniProtKB-KW"/>
</dbReference>
<dbReference type="GO" id="GO:0051539">
    <property type="term" value="F:4 iron, 4 sulfur cluster binding"/>
    <property type="evidence" value="ECO:0007669"/>
    <property type="project" value="UniProtKB-KW"/>
</dbReference>
<dbReference type="GO" id="GO:0016168">
    <property type="term" value="F:chlorophyll binding"/>
    <property type="evidence" value="ECO:0007669"/>
    <property type="project" value="UniProtKB-KW"/>
</dbReference>
<dbReference type="GO" id="GO:0009055">
    <property type="term" value="F:electron transfer activity"/>
    <property type="evidence" value="ECO:0007669"/>
    <property type="project" value="UniProtKB-UniRule"/>
</dbReference>
<dbReference type="GO" id="GO:0000287">
    <property type="term" value="F:magnesium ion binding"/>
    <property type="evidence" value="ECO:0007669"/>
    <property type="project" value="UniProtKB-UniRule"/>
</dbReference>
<dbReference type="GO" id="GO:0016491">
    <property type="term" value="F:oxidoreductase activity"/>
    <property type="evidence" value="ECO:0007669"/>
    <property type="project" value="UniProtKB-KW"/>
</dbReference>
<dbReference type="GO" id="GO:0015979">
    <property type="term" value="P:photosynthesis"/>
    <property type="evidence" value="ECO:0007669"/>
    <property type="project" value="UniProtKB-UniRule"/>
</dbReference>
<dbReference type="FunFam" id="1.20.1130.10:FF:000001">
    <property type="entry name" value="Photosystem I P700 chlorophyll a apoprotein A2"/>
    <property type="match status" value="1"/>
</dbReference>
<dbReference type="Gene3D" id="1.20.1130.10">
    <property type="entry name" value="Photosystem I PsaA/PsaB"/>
    <property type="match status" value="1"/>
</dbReference>
<dbReference type="HAMAP" id="MF_00458">
    <property type="entry name" value="PSI_PsaA"/>
    <property type="match status" value="1"/>
</dbReference>
<dbReference type="InterPro" id="IPR006243">
    <property type="entry name" value="PSI_PsaA"/>
</dbReference>
<dbReference type="InterPro" id="IPR001280">
    <property type="entry name" value="PSI_PsaA/B"/>
</dbReference>
<dbReference type="InterPro" id="IPR020586">
    <property type="entry name" value="PSI_PsaA/B_CS"/>
</dbReference>
<dbReference type="InterPro" id="IPR036408">
    <property type="entry name" value="PSI_PsaA/B_sf"/>
</dbReference>
<dbReference type="NCBIfam" id="TIGR01335">
    <property type="entry name" value="psaA"/>
    <property type="match status" value="1"/>
</dbReference>
<dbReference type="PANTHER" id="PTHR30128">
    <property type="entry name" value="OUTER MEMBRANE PROTEIN, OMPA-RELATED"/>
    <property type="match status" value="1"/>
</dbReference>
<dbReference type="PANTHER" id="PTHR30128:SF19">
    <property type="entry name" value="PHOTOSYSTEM I P700 CHLOROPHYLL A APOPROTEIN A1-RELATED"/>
    <property type="match status" value="1"/>
</dbReference>
<dbReference type="Pfam" id="PF00223">
    <property type="entry name" value="PsaA_PsaB"/>
    <property type="match status" value="1"/>
</dbReference>
<dbReference type="PIRSF" id="PIRSF002905">
    <property type="entry name" value="PSI_A"/>
    <property type="match status" value="1"/>
</dbReference>
<dbReference type="PRINTS" id="PR00257">
    <property type="entry name" value="PHOTSYSPSAAB"/>
</dbReference>
<dbReference type="SUPFAM" id="SSF81558">
    <property type="entry name" value="Photosystem I subunits PsaA/PsaB"/>
    <property type="match status" value="1"/>
</dbReference>
<dbReference type="PROSITE" id="PS00419">
    <property type="entry name" value="PHOTOSYSTEM_I_PSAAB"/>
    <property type="match status" value="1"/>
</dbReference>
<protein>
    <recommendedName>
        <fullName evidence="1">Photosystem I P700 chlorophyll a apoprotein A1</fullName>
        <ecNumber evidence="1">1.97.1.12</ecNumber>
    </recommendedName>
    <alternativeName>
        <fullName evidence="1">PSI-A</fullName>
    </alternativeName>
    <alternativeName>
        <fullName evidence="1">PsaA</fullName>
    </alternativeName>
</protein>
<sequence>MIIRSPEPEVKIVVDRDPIKTSFEEWARPGHFSRTIAKGPDTTTWIWNLHADAHDFDSHTSDLEEISRKVFSAHFGQLSIIFLWLSGMYFHGARFSNYEAWLSDPTHIGPSAQVVWPIVGQEILNGDVGGGFRGIQITSGFFQIWRASGITSELQLYCTAIGALVFAALMLFAGWFHYHKAAPKLAWFQDVESMLNHHLAGLLGLGSLSWAGHQVHVSLPINQFLDAGVDPKEIPLPHEFILNRDLLAQLYPSFAEGATPFFTLNWSKYAEFLSFRGGLNPVTGGLWLTDIAHHHLAIAILFLIAGHMYRTNWGIGHGLKDILEAHKGPFTGQGHKGLYEILTTSWHAQLSLNLAMLGSSTIVVAHHMYSMPPYPYLAIDYGTQLSLFTHHMWIGGFLIVGAAAHAAIFMVRDYDPTTRYNDLLDRVLRHRDAIISHLNWACIFLGFHSFGLYIHNDTMSALGRPQDMFSDTAIQLQPIFAQWVQNTHALAPGATAPGATTSTSLTWGGSDLVAVGGKVALLPIPLGTADFLVHHIHAFTIHVTVLILLKGVLFARSSRLIPDKANLGFRFPCDGPGRGGTCQVSAWDHVFLGLFWMYNAISVVIFHFSWKMQSDVWGSISDQGVVTHITGGNFAQSSITINGWLRDFLWAQASQVIQSYGSSLSAYGLFFLGAHFVWAFSLMFLFSGRGYWQELIESIVWAHNKLKVAPATQPRALSIVQGRAVGVTHYLLGGIATTWAFFLARIIAVG</sequence>
<comment type="function">
    <text>PsaA and PsaB bind P700, the primary electron donor of photosystem I (PSI), as well as the electron acceptors A0, A1 and FX. PSI is a plastocyanin-ferredoxin oxidoreductase, converting photonic excitation into a charge separation, which transfers an electron from the donor P700 chlorophyll pair to the spectroscopically characterized acceptors A0, A1, FX, FA and FB in turn. Oxidized P700 is reduced on the lumenal side of the thylakoid membrane by plastocyanin.</text>
</comment>
<comment type="catalytic activity">
    <reaction evidence="1">
        <text>reduced [plastocyanin] + hnu + oxidized [2Fe-2S]-[ferredoxin] = oxidized [plastocyanin] + reduced [2Fe-2S]-[ferredoxin]</text>
        <dbReference type="Rhea" id="RHEA:30407"/>
        <dbReference type="Rhea" id="RHEA-COMP:10000"/>
        <dbReference type="Rhea" id="RHEA-COMP:10001"/>
        <dbReference type="Rhea" id="RHEA-COMP:10039"/>
        <dbReference type="Rhea" id="RHEA-COMP:10040"/>
        <dbReference type="ChEBI" id="CHEBI:29036"/>
        <dbReference type="ChEBI" id="CHEBI:30212"/>
        <dbReference type="ChEBI" id="CHEBI:33737"/>
        <dbReference type="ChEBI" id="CHEBI:33738"/>
        <dbReference type="ChEBI" id="CHEBI:49552"/>
        <dbReference type="EC" id="1.97.1.12"/>
    </reaction>
</comment>
<comment type="cofactor">
    <text evidence="1">P700 is a chlorophyll a/chlorophyll a' dimer, A0 is one or more chlorophyll a, A1 is one or both phylloquinones and FX is a shared 4Fe-4S iron-sulfur center.</text>
</comment>
<comment type="subunit">
    <text evidence="1">The PsaA/B heterodimer binds the P700 chlorophyll special pair and subsequent electron acceptors. PSI consists of a core antenna complex that captures photons, and an electron transfer chain that converts photonic excitation into a charge separation. The eukaryotic PSI reaction center is composed of at least 11 subunits.</text>
</comment>
<comment type="subcellular location">
    <subcellularLocation>
        <location evidence="1">Plastid</location>
        <location evidence="1">Chloroplast thylakoid membrane</location>
        <topology evidence="1">Multi-pass membrane protein</topology>
    </subcellularLocation>
</comment>
<comment type="similarity">
    <text evidence="1">Belongs to the PsaA/PsaB family.</text>
</comment>
<feature type="chain" id="PRO_0000275950" description="Photosystem I P700 chlorophyll a apoprotein A1">
    <location>
        <begin position="1"/>
        <end position="750"/>
    </location>
</feature>
<feature type="transmembrane region" description="Helical; Name=I" evidence="1">
    <location>
        <begin position="70"/>
        <end position="93"/>
    </location>
</feature>
<feature type="transmembrane region" description="Helical; Name=II" evidence="1">
    <location>
        <begin position="156"/>
        <end position="179"/>
    </location>
</feature>
<feature type="transmembrane region" description="Helical; Name=III" evidence="1">
    <location>
        <begin position="195"/>
        <end position="219"/>
    </location>
</feature>
<feature type="transmembrane region" description="Helical; Name=IV" evidence="1">
    <location>
        <begin position="291"/>
        <end position="309"/>
    </location>
</feature>
<feature type="transmembrane region" description="Helical; Name=V" evidence="1">
    <location>
        <begin position="346"/>
        <end position="369"/>
    </location>
</feature>
<feature type="transmembrane region" description="Helical; Name=VI" evidence="1">
    <location>
        <begin position="385"/>
        <end position="411"/>
    </location>
</feature>
<feature type="transmembrane region" description="Helical; Name=VII" evidence="1">
    <location>
        <begin position="433"/>
        <end position="455"/>
    </location>
</feature>
<feature type="transmembrane region" description="Helical; Name=VIII" evidence="1">
    <location>
        <begin position="531"/>
        <end position="549"/>
    </location>
</feature>
<feature type="transmembrane region" description="Helical; Name=IX" evidence="1">
    <location>
        <begin position="589"/>
        <end position="610"/>
    </location>
</feature>
<feature type="transmembrane region" description="Helical; Name=X" evidence="1">
    <location>
        <begin position="664"/>
        <end position="686"/>
    </location>
</feature>
<feature type="transmembrane region" description="Helical; Name=XI" evidence="1">
    <location>
        <begin position="724"/>
        <end position="744"/>
    </location>
</feature>
<feature type="binding site" evidence="1">
    <location>
        <position position="573"/>
    </location>
    <ligand>
        <name>[4Fe-4S] cluster</name>
        <dbReference type="ChEBI" id="CHEBI:49883"/>
        <note>ligand shared between dimeric partners</note>
    </ligand>
</feature>
<feature type="binding site" evidence="1">
    <location>
        <position position="582"/>
    </location>
    <ligand>
        <name>[4Fe-4S] cluster</name>
        <dbReference type="ChEBI" id="CHEBI:49883"/>
        <note>ligand shared between dimeric partners</note>
    </ligand>
</feature>
<feature type="binding site" description="axial binding residue" evidence="1">
    <location>
        <position position="675"/>
    </location>
    <ligand>
        <name>chlorophyll a'</name>
        <dbReference type="ChEBI" id="CHEBI:189419"/>
        <label>A1</label>
    </ligand>
    <ligandPart>
        <name>Mg</name>
        <dbReference type="ChEBI" id="CHEBI:25107"/>
    </ligandPart>
</feature>
<feature type="binding site" description="axial binding residue" evidence="1">
    <location>
        <position position="683"/>
    </location>
    <ligand>
        <name>chlorophyll a</name>
        <dbReference type="ChEBI" id="CHEBI:58416"/>
        <label>A3</label>
    </ligand>
    <ligandPart>
        <name>Mg</name>
        <dbReference type="ChEBI" id="CHEBI:25107"/>
    </ligandPart>
</feature>
<feature type="binding site" evidence="1">
    <location>
        <position position="691"/>
    </location>
    <ligand>
        <name>chlorophyll a</name>
        <dbReference type="ChEBI" id="CHEBI:58416"/>
        <label>A3</label>
    </ligand>
</feature>
<feature type="binding site" evidence="1">
    <location>
        <position position="692"/>
    </location>
    <ligand>
        <name>phylloquinone</name>
        <dbReference type="ChEBI" id="CHEBI:18067"/>
        <label>A</label>
    </ligand>
</feature>
<keyword id="KW-0004">4Fe-4S</keyword>
<keyword id="KW-0148">Chlorophyll</keyword>
<keyword id="KW-0150">Chloroplast</keyword>
<keyword id="KW-0157">Chromophore</keyword>
<keyword id="KW-0249">Electron transport</keyword>
<keyword id="KW-0408">Iron</keyword>
<keyword id="KW-0411">Iron-sulfur</keyword>
<keyword id="KW-0460">Magnesium</keyword>
<keyword id="KW-0472">Membrane</keyword>
<keyword id="KW-0479">Metal-binding</keyword>
<keyword id="KW-0560">Oxidoreductase</keyword>
<keyword id="KW-0602">Photosynthesis</keyword>
<keyword id="KW-0603">Photosystem I</keyword>
<keyword id="KW-0934">Plastid</keyword>
<keyword id="KW-0793">Thylakoid</keyword>
<keyword id="KW-0812">Transmembrane</keyword>
<keyword id="KW-1133">Transmembrane helix</keyword>
<keyword id="KW-0813">Transport</keyword>